<keyword id="KW-0903">Direct protein sequencing</keyword>
<keyword id="KW-0964">Secreted</keyword>
<keyword id="KW-0732">Signal</keyword>
<dbReference type="EMBL" id="M59436">
    <property type="protein sequence ID" value="AAA29317.1"/>
    <property type="molecule type" value="mRNA"/>
</dbReference>
<dbReference type="PIR" id="A40668">
    <property type="entry name" value="A40668"/>
</dbReference>
<dbReference type="SMR" id="P15500"/>
<dbReference type="OrthoDB" id="7219269at2759"/>
<dbReference type="GO" id="GO:0005576">
    <property type="term" value="C:extracellular region"/>
    <property type="evidence" value="ECO:0007669"/>
    <property type="project" value="UniProtKB-SubCell"/>
</dbReference>
<dbReference type="Gene3D" id="3.15.10.30">
    <property type="entry name" value="Haemolymph juvenile hormone binding protein"/>
    <property type="match status" value="1"/>
</dbReference>
<dbReference type="InterPro" id="IPR010562">
    <property type="entry name" value="Haemolymph_juvenile_hormone-bd"/>
</dbReference>
<dbReference type="InterPro" id="IPR038606">
    <property type="entry name" value="To_sf"/>
</dbReference>
<dbReference type="Pfam" id="PF06585">
    <property type="entry name" value="JHBP"/>
    <property type="match status" value="1"/>
</dbReference>
<dbReference type="SMART" id="SM00700">
    <property type="entry name" value="JHBP"/>
    <property type="match status" value="1"/>
</dbReference>
<evidence type="ECO:0000269" key="1">
    <source>
    </source>
</evidence>
<protein>
    <recommendedName>
        <fullName>Juvenile hormone-binding protein</fullName>
    </recommendedName>
</protein>
<comment type="function">
    <text>Prevents juvenile hormone from being hydrolyzed by general esterases by combining with it specifically.</text>
</comment>
<comment type="subcellular location">
    <subcellularLocation>
        <location>Secreted</location>
    </subcellularLocation>
</comment>
<accession>P15500</accession>
<feature type="signal peptide" evidence="1">
    <location>
        <begin position="1" status="less than"/>
        <end position="3"/>
    </location>
</feature>
<feature type="chain" id="PRO_0000021533" description="Juvenile hormone-binding protein">
    <location>
        <begin position="4"/>
        <end position="229"/>
    </location>
</feature>
<feature type="sequence variant">
    <original>R</original>
    <variation>T</variation>
    <location>
        <position position="22"/>
    </location>
</feature>
<feature type="sequence variant">
    <original>E</original>
    <variation>D</variation>
    <location>
        <position position="29"/>
    </location>
</feature>
<feature type="sequence variant">
    <original>EY</original>
    <variation>NI</variation>
    <location>
        <begin position="37"/>
        <end position="38"/>
    </location>
</feature>
<feature type="non-terminal residue">
    <location>
        <position position="1"/>
    </location>
</feature>
<proteinExistence type="evidence at protein level"/>
<gene>
    <name type="primary">JHBP</name>
</gene>
<reference key="1">
    <citation type="journal article" date="1990" name="J. Biol. Chem.">
        <title>Cloning and sequencing of a cDNA for the hemolymph juvenile hormone binding protein of larval Manduca sexta.</title>
        <authorList>
            <person name="Lerro K.A."/>
            <person name="Prestwich G.D."/>
        </authorList>
    </citation>
    <scope>NUCLEOTIDE SEQUENCE [MRNA]</scope>
</reference>
<reference key="2">
    <citation type="journal article" date="1988" name="FEBS Lett.">
        <title>Detection and microsequencing of juvenile hormone-binding proteins of an insect by the use of an iodinated juvenile hormone analog.</title>
        <authorList>
            <person name="Kulcsar P."/>
            <person name="Prestwich G.D."/>
        </authorList>
    </citation>
    <scope>PROTEIN SEQUENCE OF 4-38</scope>
</reference>
<sequence>VLSDQGALFEPCSTQDIACLSRATQQFLEKACRGVPEYDIRPIDPLIISSLDVAAYDDIGLIFHFKNLNITGLKNQKISDFRMDTTRKSVLLKTQADLNVVADVVIELSKQSKSFAGVMNIQASIIGGAKYSYDLQDDSKGVKHFEVGQETISCESIGEPAVNLNPELADALLKDPDTTHYRKDYEAHRVSIRQRSLCKIVELCYVDVVHNIRAVAKILPSTAFFTDVN</sequence>
<organism>
    <name type="scientific">Manduca sexta</name>
    <name type="common">Tobacco hawkmoth</name>
    <name type="synonym">Tobacco hornworm</name>
    <dbReference type="NCBI Taxonomy" id="7130"/>
    <lineage>
        <taxon>Eukaryota</taxon>
        <taxon>Metazoa</taxon>
        <taxon>Ecdysozoa</taxon>
        <taxon>Arthropoda</taxon>
        <taxon>Hexapoda</taxon>
        <taxon>Insecta</taxon>
        <taxon>Pterygota</taxon>
        <taxon>Neoptera</taxon>
        <taxon>Endopterygota</taxon>
        <taxon>Lepidoptera</taxon>
        <taxon>Glossata</taxon>
        <taxon>Ditrysia</taxon>
        <taxon>Bombycoidea</taxon>
        <taxon>Sphingidae</taxon>
        <taxon>Sphinginae</taxon>
        <taxon>Sphingini</taxon>
        <taxon>Manduca</taxon>
    </lineage>
</organism>
<name>JHBP_MANSE</name>